<dbReference type="EC" id="3.1.-.-" evidence="1"/>
<dbReference type="EMBL" id="CP000606">
    <property type="protein sequence ID" value="ABO24791.1"/>
    <property type="molecule type" value="Genomic_DNA"/>
</dbReference>
<dbReference type="RefSeq" id="WP_011866722.1">
    <property type="nucleotide sequence ID" value="NC_009092.1"/>
</dbReference>
<dbReference type="SMR" id="A3QH43"/>
<dbReference type="STRING" id="323850.Shew_2925"/>
<dbReference type="KEGG" id="slo:Shew_2925"/>
<dbReference type="eggNOG" id="COG0319">
    <property type="taxonomic scope" value="Bacteria"/>
</dbReference>
<dbReference type="HOGENOM" id="CLU_106710_0_1_6"/>
<dbReference type="OrthoDB" id="9807740at2"/>
<dbReference type="Proteomes" id="UP000001558">
    <property type="component" value="Chromosome"/>
</dbReference>
<dbReference type="GO" id="GO:0005737">
    <property type="term" value="C:cytoplasm"/>
    <property type="evidence" value="ECO:0007669"/>
    <property type="project" value="UniProtKB-SubCell"/>
</dbReference>
<dbReference type="GO" id="GO:0004222">
    <property type="term" value="F:metalloendopeptidase activity"/>
    <property type="evidence" value="ECO:0007669"/>
    <property type="project" value="InterPro"/>
</dbReference>
<dbReference type="GO" id="GO:0004521">
    <property type="term" value="F:RNA endonuclease activity"/>
    <property type="evidence" value="ECO:0007669"/>
    <property type="project" value="UniProtKB-UniRule"/>
</dbReference>
<dbReference type="GO" id="GO:0008270">
    <property type="term" value="F:zinc ion binding"/>
    <property type="evidence" value="ECO:0007669"/>
    <property type="project" value="UniProtKB-UniRule"/>
</dbReference>
<dbReference type="GO" id="GO:0006364">
    <property type="term" value="P:rRNA processing"/>
    <property type="evidence" value="ECO:0007669"/>
    <property type="project" value="UniProtKB-UniRule"/>
</dbReference>
<dbReference type="Gene3D" id="3.40.390.30">
    <property type="entry name" value="Metalloproteases ('zincins'), catalytic domain"/>
    <property type="match status" value="1"/>
</dbReference>
<dbReference type="HAMAP" id="MF_00009">
    <property type="entry name" value="Endoribonucl_YbeY"/>
    <property type="match status" value="1"/>
</dbReference>
<dbReference type="InterPro" id="IPR023091">
    <property type="entry name" value="MetalPrtase_cat_dom_sf_prd"/>
</dbReference>
<dbReference type="InterPro" id="IPR002036">
    <property type="entry name" value="YbeY"/>
</dbReference>
<dbReference type="InterPro" id="IPR020549">
    <property type="entry name" value="YbeY_CS"/>
</dbReference>
<dbReference type="NCBIfam" id="TIGR00043">
    <property type="entry name" value="rRNA maturation RNase YbeY"/>
    <property type="match status" value="1"/>
</dbReference>
<dbReference type="PANTHER" id="PTHR46986">
    <property type="entry name" value="ENDORIBONUCLEASE YBEY, CHLOROPLASTIC"/>
    <property type="match status" value="1"/>
</dbReference>
<dbReference type="PANTHER" id="PTHR46986:SF1">
    <property type="entry name" value="ENDORIBONUCLEASE YBEY, CHLOROPLASTIC"/>
    <property type="match status" value="1"/>
</dbReference>
<dbReference type="Pfam" id="PF02130">
    <property type="entry name" value="YbeY"/>
    <property type="match status" value="1"/>
</dbReference>
<dbReference type="SUPFAM" id="SSF55486">
    <property type="entry name" value="Metalloproteases ('zincins'), catalytic domain"/>
    <property type="match status" value="1"/>
</dbReference>
<dbReference type="PROSITE" id="PS01306">
    <property type="entry name" value="UPF0054"/>
    <property type="match status" value="1"/>
</dbReference>
<organism>
    <name type="scientific">Shewanella loihica (strain ATCC BAA-1088 / PV-4)</name>
    <dbReference type="NCBI Taxonomy" id="323850"/>
    <lineage>
        <taxon>Bacteria</taxon>
        <taxon>Pseudomonadati</taxon>
        <taxon>Pseudomonadota</taxon>
        <taxon>Gammaproteobacteria</taxon>
        <taxon>Alteromonadales</taxon>
        <taxon>Shewanellaceae</taxon>
        <taxon>Shewanella</taxon>
    </lineage>
</organism>
<evidence type="ECO:0000255" key="1">
    <source>
        <dbReference type="HAMAP-Rule" id="MF_00009"/>
    </source>
</evidence>
<gene>
    <name evidence="1" type="primary">ybeY</name>
    <name type="ordered locus">Shew_2925</name>
</gene>
<proteinExistence type="inferred from homology"/>
<sequence length="157" mass="17656">MMPDSPIALHLDLQVATQAEQLPSQEEFESWVRLALGNVMPEAEMTIRLVDEAESQQLNHTYRGKDKPTNVLSFPFESPPEVELPLLGDLVICVPVVEQEAEIQGKSLTAHWAHMVVHGCLHLLGYDHIIDSEAEEMESLETQLIESLGFPNPYKEQ</sequence>
<feature type="chain" id="PRO_0000321784" description="Endoribonuclease YbeY">
    <location>
        <begin position="1"/>
        <end position="157"/>
    </location>
</feature>
<feature type="binding site" evidence="1">
    <location>
        <position position="118"/>
    </location>
    <ligand>
        <name>Zn(2+)</name>
        <dbReference type="ChEBI" id="CHEBI:29105"/>
        <note>catalytic</note>
    </ligand>
</feature>
<feature type="binding site" evidence="1">
    <location>
        <position position="122"/>
    </location>
    <ligand>
        <name>Zn(2+)</name>
        <dbReference type="ChEBI" id="CHEBI:29105"/>
        <note>catalytic</note>
    </ligand>
</feature>
<feature type="binding site" evidence="1">
    <location>
        <position position="128"/>
    </location>
    <ligand>
        <name>Zn(2+)</name>
        <dbReference type="ChEBI" id="CHEBI:29105"/>
        <note>catalytic</note>
    </ligand>
</feature>
<name>YBEY_SHELP</name>
<protein>
    <recommendedName>
        <fullName evidence="1">Endoribonuclease YbeY</fullName>
        <ecNumber evidence="1">3.1.-.-</ecNumber>
    </recommendedName>
</protein>
<accession>A3QH43</accession>
<comment type="function">
    <text evidence="1">Single strand-specific metallo-endoribonuclease involved in late-stage 70S ribosome quality control and in maturation of the 3' terminus of the 16S rRNA.</text>
</comment>
<comment type="cofactor">
    <cofactor evidence="1">
        <name>Zn(2+)</name>
        <dbReference type="ChEBI" id="CHEBI:29105"/>
    </cofactor>
    <text evidence="1">Binds 1 zinc ion.</text>
</comment>
<comment type="subcellular location">
    <subcellularLocation>
        <location evidence="1">Cytoplasm</location>
    </subcellularLocation>
</comment>
<comment type="similarity">
    <text evidence="1">Belongs to the endoribonuclease YbeY family.</text>
</comment>
<keyword id="KW-0963">Cytoplasm</keyword>
<keyword id="KW-0255">Endonuclease</keyword>
<keyword id="KW-0378">Hydrolase</keyword>
<keyword id="KW-0479">Metal-binding</keyword>
<keyword id="KW-0540">Nuclease</keyword>
<keyword id="KW-1185">Reference proteome</keyword>
<keyword id="KW-0690">Ribosome biogenesis</keyword>
<keyword id="KW-0698">rRNA processing</keyword>
<keyword id="KW-0862">Zinc</keyword>
<reference key="1">
    <citation type="submission" date="2007-03" db="EMBL/GenBank/DDBJ databases">
        <title>Complete sequence of Shewanella loihica PV-4.</title>
        <authorList>
            <consortium name="US DOE Joint Genome Institute"/>
            <person name="Copeland A."/>
            <person name="Lucas S."/>
            <person name="Lapidus A."/>
            <person name="Barry K."/>
            <person name="Detter J.C."/>
            <person name="Glavina del Rio T."/>
            <person name="Hammon N."/>
            <person name="Israni S."/>
            <person name="Dalin E."/>
            <person name="Tice H."/>
            <person name="Pitluck S."/>
            <person name="Chain P."/>
            <person name="Malfatti S."/>
            <person name="Shin M."/>
            <person name="Vergez L."/>
            <person name="Schmutz J."/>
            <person name="Larimer F."/>
            <person name="Land M."/>
            <person name="Hauser L."/>
            <person name="Kyrpides N."/>
            <person name="Mikhailova N."/>
            <person name="Romine M.F."/>
            <person name="Serres G."/>
            <person name="Fredrickson J."/>
            <person name="Tiedje J."/>
            <person name="Richardson P."/>
        </authorList>
    </citation>
    <scope>NUCLEOTIDE SEQUENCE [LARGE SCALE GENOMIC DNA]</scope>
    <source>
        <strain>ATCC BAA-1088 / PV-4</strain>
    </source>
</reference>